<comment type="function">
    <text evidence="1">Involved in the binding of tRNA to the ribosomes.</text>
</comment>
<comment type="subunit">
    <text evidence="1">Part of the 30S ribosomal subunit.</text>
</comment>
<comment type="similarity">
    <text evidence="1">Belongs to the universal ribosomal protein uS10 family.</text>
</comment>
<reference key="1">
    <citation type="submission" date="2008-05" db="EMBL/GenBank/DDBJ databases">
        <title>Complete sequence of chromosome of Geobacter lovleyi SZ.</title>
        <authorList>
            <consortium name="US DOE Joint Genome Institute"/>
            <person name="Lucas S."/>
            <person name="Copeland A."/>
            <person name="Lapidus A."/>
            <person name="Glavina del Rio T."/>
            <person name="Dalin E."/>
            <person name="Tice H."/>
            <person name="Bruce D."/>
            <person name="Goodwin L."/>
            <person name="Pitluck S."/>
            <person name="Chertkov O."/>
            <person name="Meincke L."/>
            <person name="Brettin T."/>
            <person name="Detter J.C."/>
            <person name="Han C."/>
            <person name="Tapia R."/>
            <person name="Kuske C.R."/>
            <person name="Schmutz J."/>
            <person name="Larimer F."/>
            <person name="Land M."/>
            <person name="Hauser L."/>
            <person name="Kyrpides N."/>
            <person name="Mikhailova N."/>
            <person name="Sung Y."/>
            <person name="Fletcher K.E."/>
            <person name="Ritalahti K.M."/>
            <person name="Loeffler F.E."/>
            <person name="Richardson P."/>
        </authorList>
    </citation>
    <scope>NUCLEOTIDE SEQUENCE [LARGE SCALE GENOMIC DNA]</scope>
    <source>
        <strain>ATCC BAA-1151 / DSM 17278 / SZ</strain>
    </source>
</reference>
<gene>
    <name evidence="1" type="primary">rpsJ</name>
    <name type="ordered locus">Glov_1345</name>
</gene>
<protein>
    <recommendedName>
        <fullName evidence="1">Small ribosomal subunit protein uS10</fullName>
    </recommendedName>
    <alternativeName>
        <fullName evidence="2">30S ribosomal protein S10</fullName>
    </alternativeName>
</protein>
<feature type="chain" id="PRO_1000127131" description="Small ribosomal subunit protein uS10">
    <location>
        <begin position="1"/>
        <end position="102"/>
    </location>
</feature>
<accession>B3E7T4</accession>
<dbReference type="EMBL" id="CP001089">
    <property type="protein sequence ID" value="ACD95066.1"/>
    <property type="molecule type" value="Genomic_DNA"/>
</dbReference>
<dbReference type="RefSeq" id="WP_012469411.1">
    <property type="nucleotide sequence ID" value="NC_010814.1"/>
</dbReference>
<dbReference type="SMR" id="B3E7T4"/>
<dbReference type="STRING" id="398767.Glov_1345"/>
<dbReference type="KEGG" id="glo:Glov_1345"/>
<dbReference type="eggNOG" id="COG0051">
    <property type="taxonomic scope" value="Bacteria"/>
</dbReference>
<dbReference type="HOGENOM" id="CLU_122625_1_3_7"/>
<dbReference type="OrthoDB" id="9804464at2"/>
<dbReference type="Proteomes" id="UP000002420">
    <property type="component" value="Chromosome"/>
</dbReference>
<dbReference type="GO" id="GO:1990904">
    <property type="term" value="C:ribonucleoprotein complex"/>
    <property type="evidence" value="ECO:0007669"/>
    <property type="project" value="UniProtKB-KW"/>
</dbReference>
<dbReference type="GO" id="GO:0005840">
    <property type="term" value="C:ribosome"/>
    <property type="evidence" value="ECO:0007669"/>
    <property type="project" value="UniProtKB-KW"/>
</dbReference>
<dbReference type="GO" id="GO:0003735">
    <property type="term" value="F:structural constituent of ribosome"/>
    <property type="evidence" value="ECO:0007669"/>
    <property type="project" value="InterPro"/>
</dbReference>
<dbReference type="GO" id="GO:0000049">
    <property type="term" value="F:tRNA binding"/>
    <property type="evidence" value="ECO:0007669"/>
    <property type="project" value="UniProtKB-UniRule"/>
</dbReference>
<dbReference type="GO" id="GO:0006412">
    <property type="term" value="P:translation"/>
    <property type="evidence" value="ECO:0007669"/>
    <property type="project" value="UniProtKB-UniRule"/>
</dbReference>
<dbReference type="FunFam" id="3.30.70.600:FF:000001">
    <property type="entry name" value="30S ribosomal protein S10"/>
    <property type="match status" value="1"/>
</dbReference>
<dbReference type="Gene3D" id="3.30.70.600">
    <property type="entry name" value="Ribosomal protein S10 domain"/>
    <property type="match status" value="1"/>
</dbReference>
<dbReference type="HAMAP" id="MF_00508">
    <property type="entry name" value="Ribosomal_uS10"/>
    <property type="match status" value="1"/>
</dbReference>
<dbReference type="InterPro" id="IPR001848">
    <property type="entry name" value="Ribosomal_uS10"/>
</dbReference>
<dbReference type="InterPro" id="IPR018268">
    <property type="entry name" value="Ribosomal_uS10_CS"/>
</dbReference>
<dbReference type="InterPro" id="IPR027486">
    <property type="entry name" value="Ribosomal_uS10_dom"/>
</dbReference>
<dbReference type="InterPro" id="IPR036838">
    <property type="entry name" value="Ribosomal_uS10_dom_sf"/>
</dbReference>
<dbReference type="NCBIfam" id="NF001861">
    <property type="entry name" value="PRK00596.1"/>
    <property type="match status" value="1"/>
</dbReference>
<dbReference type="NCBIfam" id="TIGR01049">
    <property type="entry name" value="rpsJ_bact"/>
    <property type="match status" value="1"/>
</dbReference>
<dbReference type="PANTHER" id="PTHR11700">
    <property type="entry name" value="30S RIBOSOMAL PROTEIN S10 FAMILY MEMBER"/>
    <property type="match status" value="1"/>
</dbReference>
<dbReference type="Pfam" id="PF00338">
    <property type="entry name" value="Ribosomal_S10"/>
    <property type="match status" value="1"/>
</dbReference>
<dbReference type="PRINTS" id="PR00971">
    <property type="entry name" value="RIBOSOMALS10"/>
</dbReference>
<dbReference type="SMART" id="SM01403">
    <property type="entry name" value="Ribosomal_S10"/>
    <property type="match status" value="1"/>
</dbReference>
<dbReference type="SUPFAM" id="SSF54999">
    <property type="entry name" value="Ribosomal protein S10"/>
    <property type="match status" value="1"/>
</dbReference>
<dbReference type="PROSITE" id="PS00361">
    <property type="entry name" value="RIBOSOMAL_S10"/>
    <property type="match status" value="1"/>
</dbReference>
<proteinExistence type="inferred from homology"/>
<evidence type="ECO:0000255" key="1">
    <source>
        <dbReference type="HAMAP-Rule" id="MF_00508"/>
    </source>
</evidence>
<evidence type="ECO:0000305" key="2"/>
<name>RS10_TRIL1</name>
<keyword id="KW-1185">Reference proteome</keyword>
<keyword id="KW-0687">Ribonucleoprotein</keyword>
<keyword id="KW-0689">Ribosomal protein</keyword>
<sequence>MQSQKIRIRLKAYDHKLLDVSVGEIVETAKRTGARVAGPIPLPTVINKYCVLRGPHVDKKSRDQFEIRTHKRLIDILDPTQQTVDALMKLDLSAGVDVEIKL</sequence>
<organism>
    <name type="scientific">Trichlorobacter lovleyi (strain ATCC BAA-1151 / DSM 17278 / SZ)</name>
    <name type="common">Geobacter lovleyi</name>
    <dbReference type="NCBI Taxonomy" id="398767"/>
    <lineage>
        <taxon>Bacteria</taxon>
        <taxon>Pseudomonadati</taxon>
        <taxon>Thermodesulfobacteriota</taxon>
        <taxon>Desulfuromonadia</taxon>
        <taxon>Geobacterales</taxon>
        <taxon>Geobacteraceae</taxon>
        <taxon>Trichlorobacter</taxon>
    </lineage>
</organism>